<sequence>MASLKNKHFMIGLTLTFIVALFSFLAAKLPILDKVGALTIAILIAILYRHFRGYPEQYSSGITFSSKYLLRFAIILYGLKLNIFDIIGQGSRLLAIDVGVVIFSIVMMLFVNKLLHGDKNIALLLGVGTGVCGAAAIAAVAPIFKSREKDTAISIGIIALIGTIFSLIYTAIYAIFSMTTNVYGAWSGVSLHEIAHVVLAGGFGGSDALKIALLGKLGRVFLLIPLTIVLILIMRFRSSESSSNGRISIPYFLIGFVIMALVNTYVTIPSALLNILNTVSTICLLMAMVALGLNVAFKDLKNRALKPLMTIIITSICLSSLAFIVVHWLYS</sequence>
<comment type="subcellular location">
    <subcellularLocation>
        <location evidence="2">Cell membrane</location>
        <topology evidence="2">Multi-pass membrane protein</topology>
    </subcellularLocation>
</comment>
<comment type="similarity">
    <text evidence="2">Belongs to the UPF0324 family.</text>
</comment>
<organism>
    <name type="scientific">Staphylococcus aureus (strain MSSA476)</name>
    <dbReference type="NCBI Taxonomy" id="282459"/>
    <lineage>
        <taxon>Bacteria</taxon>
        <taxon>Bacillati</taxon>
        <taxon>Bacillota</taxon>
        <taxon>Bacilli</taxon>
        <taxon>Bacillales</taxon>
        <taxon>Staphylococcaceae</taxon>
        <taxon>Staphylococcus</taxon>
    </lineage>
</organism>
<gene>
    <name type="ordered locus">SAS0317</name>
</gene>
<accession>Q6GCD1</accession>
<evidence type="ECO:0000255" key="1"/>
<evidence type="ECO:0000305" key="2"/>
<proteinExistence type="inferred from homology"/>
<reference key="1">
    <citation type="journal article" date="2004" name="Proc. Natl. Acad. Sci. U.S.A.">
        <title>Complete genomes of two clinical Staphylococcus aureus strains: evidence for the rapid evolution of virulence and drug resistance.</title>
        <authorList>
            <person name="Holden M.T.G."/>
            <person name="Feil E.J."/>
            <person name="Lindsay J.A."/>
            <person name="Peacock S.J."/>
            <person name="Day N.P.J."/>
            <person name="Enright M.C."/>
            <person name="Foster T.J."/>
            <person name="Moore C.E."/>
            <person name="Hurst L."/>
            <person name="Atkin R."/>
            <person name="Barron A."/>
            <person name="Bason N."/>
            <person name="Bentley S.D."/>
            <person name="Chillingworth C."/>
            <person name="Chillingworth T."/>
            <person name="Churcher C."/>
            <person name="Clark L."/>
            <person name="Corton C."/>
            <person name="Cronin A."/>
            <person name="Doggett J."/>
            <person name="Dowd L."/>
            <person name="Feltwell T."/>
            <person name="Hance Z."/>
            <person name="Harris B."/>
            <person name="Hauser H."/>
            <person name="Holroyd S."/>
            <person name="Jagels K."/>
            <person name="James K.D."/>
            <person name="Lennard N."/>
            <person name="Line A."/>
            <person name="Mayes R."/>
            <person name="Moule S."/>
            <person name="Mungall K."/>
            <person name="Ormond D."/>
            <person name="Quail M.A."/>
            <person name="Rabbinowitsch E."/>
            <person name="Rutherford K.M."/>
            <person name="Sanders M."/>
            <person name="Sharp S."/>
            <person name="Simmonds M."/>
            <person name="Stevens K."/>
            <person name="Whitehead S."/>
            <person name="Barrell B.G."/>
            <person name="Spratt B.G."/>
            <person name="Parkhill J."/>
        </authorList>
    </citation>
    <scope>NUCLEOTIDE SEQUENCE [LARGE SCALE GENOMIC DNA]</scope>
    <source>
        <strain>MSSA476</strain>
    </source>
</reference>
<keyword id="KW-1003">Cell membrane</keyword>
<keyword id="KW-0472">Membrane</keyword>
<keyword id="KW-0812">Transmembrane</keyword>
<keyword id="KW-1133">Transmembrane helix</keyword>
<feature type="chain" id="PRO_0000157455" description="UPF0324 membrane protein SAS0317">
    <location>
        <begin position="1"/>
        <end position="331"/>
    </location>
</feature>
<feature type="transmembrane region" description="Helical" evidence="1">
    <location>
        <begin position="9"/>
        <end position="26"/>
    </location>
</feature>
<feature type="transmembrane region" description="Helical" evidence="1">
    <location>
        <begin position="31"/>
        <end position="48"/>
    </location>
</feature>
<feature type="transmembrane region" description="Helical" evidence="1">
    <location>
        <begin position="69"/>
        <end position="88"/>
    </location>
</feature>
<feature type="transmembrane region" description="Helical" evidence="1">
    <location>
        <begin position="93"/>
        <end position="115"/>
    </location>
</feature>
<feature type="transmembrane region" description="Helical" evidence="1">
    <location>
        <begin position="122"/>
        <end position="144"/>
    </location>
</feature>
<feature type="transmembrane region" description="Helical" evidence="1">
    <location>
        <begin position="154"/>
        <end position="176"/>
    </location>
</feature>
<feature type="transmembrane region" description="Helical" evidence="1">
    <location>
        <begin position="183"/>
        <end position="202"/>
    </location>
</feature>
<feature type="transmembrane region" description="Helical" evidence="1">
    <location>
        <begin position="217"/>
        <end position="234"/>
    </location>
</feature>
<feature type="transmembrane region" description="Helical" evidence="1">
    <location>
        <begin position="247"/>
        <end position="269"/>
    </location>
</feature>
<feature type="transmembrane region" description="Helical" evidence="1">
    <location>
        <begin position="273"/>
        <end position="295"/>
    </location>
</feature>
<feature type="transmembrane region" description="Helical" evidence="1">
    <location>
        <begin position="308"/>
        <end position="330"/>
    </location>
</feature>
<protein>
    <recommendedName>
        <fullName>UPF0324 membrane protein SAS0317</fullName>
    </recommendedName>
</protein>
<name>Y317_STAAS</name>
<dbReference type="EMBL" id="BX571857">
    <property type="protein sequence ID" value="CAG42088.1"/>
    <property type="molecule type" value="Genomic_DNA"/>
</dbReference>
<dbReference type="RefSeq" id="WP_000157643.1">
    <property type="nucleotide sequence ID" value="NC_002953.3"/>
</dbReference>
<dbReference type="KEGG" id="sas:SAS0317"/>
<dbReference type="HOGENOM" id="CLU_033541_0_1_9"/>
<dbReference type="GO" id="GO:0005886">
    <property type="term" value="C:plasma membrane"/>
    <property type="evidence" value="ECO:0007669"/>
    <property type="project" value="UniProtKB-SubCell"/>
</dbReference>
<dbReference type="InterPro" id="IPR018383">
    <property type="entry name" value="UPF0324_pro"/>
</dbReference>
<dbReference type="PANTHER" id="PTHR30106">
    <property type="entry name" value="INNER MEMBRANE PROTEIN YEIH-RELATED"/>
    <property type="match status" value="1"/>
</dbReference>
<dbReference type="PANTHER" id="PTHR30106:SF2">
    <property type="entry name" value="UPF0324 INNER MEMBRANE PROTEIN YEIH"/>
    <property type="match status" value="1"/>
</dbReference>
<dbReference type="Pfam" id="PF03601">
    <property type="entry name" value="Cons_hypoth698"/>
    <property type="match status" value="1"/>
</dbReference>